<proteinExistence type="inferred from homology"/>
<evidence type="ECO:0000255" key="1">
    <source>
        <dbReference type="HAMAP-Rule" id="MF_01554"/>
    </source>
</evidence>
<sequence length="445" mass="47654">MKQRQFFGTDGIRGKVGAGKMTPELALKLGWAAGRVLSRTGTKKVIIGKDTRISGYLFESALEAGLSAAGLNVLLVGPMPTPAVAYLTRTFRAEAGIVISASHNPYYDNGIKFFSTDGSKLDDAIELEIEAELEKPLTCVESHLLGKAKRIDDAAGRYIEYCKGNFPADQTLEGLKIVVDCAHGATYHIAPSVFSELGAEVIAIGDKPNGTNINHEVGATSMGKICETVLAEGADLGIALDGDGDRIMMVNRKGEVIDGDQILYILAADAQKRGQLKGGVVGTLMSNLGLDLALQALDIPFLRSNVGDRYVMEMLKKNDWRIGGENSGHILDLDHGTTGDGIVAGILVLAAMRRQNATLEQLVEPMKMLPQVLINVRFEGSNNPLDSDLVKSAQREVEQSLGARGRVLLRKSGTEPLIRVMVEGDDHDLVLAHANRIAAAVKLGC</sequence>
<feature type="chain" id="PRO_0000301376" description="Phosphoglucosamine mutase">
    <location>
        <begin position="1"/>
        <end position="445"/>
    </location>
</feature>
<feature type="active site" description="Phosphoserine intermediate" evidence="1">
    <location>
        <position position="102"/>
    </location>
</feature>
<feature type="binding site" description="via phosphate group" evidence="1">
    <location>
        <position position="102"/>
    </location>
    <ligand>
        <name>Mg(2+)</name>
        <dbReference type="ChEBI" id="CHEBI:18420"/>
    </ligand>
</feature>
<feature type="binding site" evidence="1">
    <location>
        <position position="241"/>
    </location>
    <ligand>
        <name>Mg(2+)</name>
        <dbReference type="ChEBI" id="CHEBI:18420"/>
    </ligand>
</feature>
<feature type="binding site" evidence="1">
    <location>
        <position position="243"/>
    </location>
    <ligand>
        <name>Mg(2+)</name>
        <dbReference type="ChEBI" id="CHEBI:18420"/>
    </ligand>
</feature>
<feature type="binding site" evidence="1">
    <location>
        <position position="245"/>
    </location>
    <ligand>
        <name>Mg(2+)</name>
        <dbReference type="ChEBI" id="CHEBI:18420"/>
    </ligand>
</feature>
<feature type="modified residue" description="Phosphoserine" evidence="1">
    <location>
        <position position="102"/>
    </location>
</feature>
<keyword id="KW-0413">Isomerase</keyword>
<keyword id="KW-0460">Magnesium</keyword>
<keyword id="KW-0479">Metal-binding</keyword>
<keyword id="KW-0597">Phosphoprotein</keyword>
<keyword id="KW-1185">Reference proteome</keyword>
<name>GLMM_SHEDO</name>
<gene>
    <name evidence="1" type="primary">glmM</name>
    <name type="ordered locus">Sden_1002</name>
</gene>
<protein>
    <recommendedName>
        <fullName evidence="1">Phosphoglucosamine mutase</fullName>
        <ecNumber evidence="1">5.4.2.10</ecNumber>
    </recommendedName>
</protein>
<accession>Q12QI6</accession>
<comment type="function">
    <text evidence="1">Catalyzes the conversion of glucosamine-6-phosphate to glucosamine-1-phosphate.</text>
</comment>
<comment type="catalytic activity">
    <reaction evidence="1">
        <text>alpha-D-glucosamine 1-phosphate = D-glucosamine 6-phosphate</text>
        <dbReference type="Rhea" id="RHEA:23424"/>
        <dbReference type="ChEBI" id="CHEBI:58516"/>
        <dbReference type="ChEBI" id="CHEBI:58725"/>
        <dbReference type="EC" id="5.4.2.10"/>
    </reaction>
</comment>
<comment type="cofactor">
    <cofactor evidence="1">
        <name>Mg(2+)</name>
        <dbReference type="ChEBI" id="CHEBI:18420"/>
    </cofactor>
    <text evidence="1">Binds 1 Mg(2+) ion per subunit.</text>
</comment>
<comment type="PTM">
    <text evidence="1">Activated by phosphorylation.</text>
</comment>
<comment type="similarity">
    <text evidence="1">Belongs to the phosphohexose mutase family.</text>
</comment>
<reference key="1">
    <citation type="submission" date="2006-03" db="EMBL/GenBank/DDBJ databases">
        <title>Complete sequence of Shewanella denitrificans OS217.</title>
        <authorList>
            <consortium name="US DOE Joint Genome Institute"/>
            <person name="Copeland A."/>
            <person name="Lucas S."/>
            <person name="Lapidus A."/>
            <person name="Barry K."/>
            <person name="Detter J.C."/>
            <person name="Glavina del Rio T."/>
            <person name="Hammon N."/>
            <person name="Israni S."/>
            <person name="Dalin E."/>
            <person name="Tice H."/>
            <person name="Pitluck S."/>
            <person name="Brettin T."/>
            <person name="Bruce D."/>
            <person name="Han C."/>
            <person name="Tapia R."/>
            <person name="Gilna P."/>
            <person name="Kiss H."/>
            <person name="Schmutz J."/>
            <person name="Larimer F."/>
            <person name="Land M."/>
            <person name="Hauser L."/>
            <person name="Kyrpides N."/>
            <person name="Lykidis A."/>
            <person name="Richardson P."/>
        </authorList>
    </citation>
    <scope>NUCLEOTIDE SEQUENCE [LARGE SCALE GENOMIC DNA]</scope>
    <source>
        <strain>OS217 / ATCC BAA-1090 / DSM 15013</strain>
    </source>
</reference>
<organism>
    <name type="scientific">Shewanella denitrificans (strain OS217 / ATCC BAA-1090 / DSM 15013)</name>
    <dbReference type="NCBI Taxonomy" id="318161"/>
    <lineage>
        <taxon>Bacteria</taxon>
        <taxon>Pseudomonadati</taxon>
        <taxon>Pseudomonadota</taxon>
        <taxon>Gammaproteobacteria</taxon>
        <taxon>Alteromonadales</taxon>
        <taxon>Shewanellaceae</taxon>
        <taxon>Shewanella</taxon>
    </lineage>
</organism>
<dbReference type="EC" id="5.4.2.10" evidence="1"/>
<dbReference type="EMBL" id="CP000302">
    <property type="protein sequence ID" value="ABE54290.1"/>
    <property type="molecule type" value="Genomic_DNA"/>
</dbReference>
<dbReference type="RefSeq" id="WP_011495454.1">
    <property type="nucleotide sequence ID" value="NC_007954.1"/>
</dbReference>
<dbReference type="SMR" id="Q12QI6"/>
<dbReference type="STRING" id="318161.Sden_1002"/>
<dbReference type="KEGG" id="sdn:Sden_1002"/>
<dbReference type="eggNOG" id="COG1109">
    <property type="taxonomic scope" value="Bacteria"/>
</dbReference>
<dbReference type="HOGENOM" id="CLU_016950_7_0_6"/>
<dbReference type="OrthoDB" id="9803322at2"/>
<dbReference type="Proteomes" id="UP000001982">
    <property type="component" value="Chromosome"/>
</dbReference>
<dbReference type="GO" id="GO:0005829">
    <property type="term" value="C:cytosol"/>
    <property type="evidence" value="ECO:0007669"/>
    <property type="project" value="TreeGrafter"/>
</dbReference>
<dbReference type="GO" id="GO:0000287">
    <property type="term" value="F:magnesium ion binding"/>
    <property type="evidence" value="ECO:0007669"/>
    <property type="project" value="UniProtKB-UniRule"/>
</dbReference>
<dbReference type="GO" id="GO:0008966">
    <property type="term" value="F:phosphoglucosamine mutase activity"/>
    <property type="evidence" value="ECO:0007669"/>
    <property type="project" value="UniProtKB-UniRule"/>
</dbReference>
<dbReference type="GO" id="GO:0004615">
    <property type="term" value="F:phosphomannomutase activity"/>
    <property type="evidence" value="ECO:0007669"/>
    <property type="project" value="TreeGrafter"/>
</dbReference>
<dbReference type="GO" id="GO:0005975">
    <property type="term" value="P:carbohydrate metabolic process"/>
    <property type="evidence" value="ECO:0007669"/>
    <property type="project" value="InterPro"/>
</dbReference>
<dbReference type="GO" id="GO:0009252">
    <property type="term" value="P:peptidoglycan biosynthetic process"/>
    <property type="evidence" value="ECO:0007669"/>
    <property type="project" value="TreeGrafter"/>
</dbReference>
<dbReference type="GO" id="GO:0006048">
    <property type="term" value="P:UDP-N-acetylglucosamine biosynthetic process"/>
    <property type="evidence" value="ECO:0007669"/>
    <property type="project" value="TreeGrafter"/>
</dbReference>
<dbReference type="CDD" id="cd05802">
    <property type="entry name" value="GlmM"/>
    <property type="match status" value="1"/>
</dbReference>
<dbReference type="FunFam" id="3.30.310.50:FF:000001">
    <property type="entry name" value="Phosphoglucosamine mutase"/>
    <property type="match status" value="1"/>
</dbReference>
<dbReference type="FunFam" id="3.40.120.10:FF:000001">
    <property type="entry name" value="Phosphoglucosamine mutase"/>
    <property type="match status" value="1"/>
</dbReference>
<dbReference type="FunFam" id="3.40.120.10:FF:000003">
    <property type="entry name" value="Phosphoglucosamine mutase"/>
    <property type="match status" value="1"/>
</dbReference>
<dbReference type="Gene3D" id="3.40.120.10">
    <property type="entry name" value="Alpha-D-Glucose-1,6-Bisphosphate, subunit A, domain 3"/>
    <property type="match status" value="3"/>
</dbReference>
<dbReference type="Gene3D" id="3.30.310.50">
    <property type="entry name" value="Alpha-D-phosphohexomutase, C-terminal domain"/>
    <property type="match status" value="1"/>
</dbReference>
<dbReference type="HAMAP" id="MF_01554_B">
    <property type="entry name" value="GlmM_B"/>
    <property type="match status" value="1"/>
</dbReference>
<dbReference type="InterPro" id="IPR005844">
    <property type="entry name" value="A-D-PHexomutase_a/b/a-I"/>
</dbReference>
<dbReference type="InterPro" id="IPR016055">
    <property type="entry name" value="A-D-PHexomutase_a/b/a-I/II/III"/>
</dbReference>
<dbReference type="InterPro" id="IPR005845">
    <property type="entry name" value="A-D-PHexomutase_a/b/a-II"/>
</dbReference>
<dbReference type="InterPro" id="IPR005846">
    <property type="entry name" value="A-D-PHexomutase_a/b/a-III"/>
</dbReference>
<dbReference type="InterPro" id="IPR005843">
    <property type="entry name" value="A-D-PHexomutase_C"/>
</dbReference>
<dbReference type="InterPro" id="IPR036900">
    <property type="entry name" value="A-D-PHexomutase_C_sf"/>
</dbReference>
<dbReference type="InterPro" id="IPR016066">
    <property type="entry name" value="A-D-PHexomutase_CS"/>
</dbReference>
<dbReference type="InterPro" id="IPR005841">
    <property type="entry name" value="Alpha-D-phosphohexomutase_SF"/>
</dbReference>
<dbReference type="InterPro" id="IPR006352">
    <property type="entry name" value="GlmM_bact"/>
</dbReference>
<dbReference type="InterPro" id="IPR050060">
    <property type="entry name" value="Phosphoglucosamine_mutase"/>
</dbReference>
<dbReference type="NCBIfam" id="TIGR01455">
    <property type="entry name" value="glmM"/>
    <property type="match status" value="1"/>
</dbReference>
<dbReference type="NCBIfam" id="NF008139">
    <property type="entry name" value="PRK10887.1"/>
    <property type="match status" value="1"/>
</dbReference>
<dbReference type="PANTHER" id="PTHR42946:SF1">
    <property type="entry name" value="PHOSPHOGLUCOMUTASE (ALPHA-D-GLUCOSE-1,6-BISPHOSPHATE-DEPENDENT)"/>
    <property type="match status" value="1"/>
</dbReference>
<dbReference type="PANTHER" id="PTHR42946">
    <property type="entry name" value="PHOSPHOHEXOSE MUTASE"/>
    <property type="match status" value="1"/>
</dbReference>
<dbReference type="Pfam" id="PF02878">
    <property type="entry name" value="PGM_PMM_I"/>
    <property type="match status" value="1"/>
</dbReference>
<dbReference type="Pfam" id="PF02879">
    <property type="entry name" value="PGM_PMM_II"/>
    <property type="match status" value="1"/>
</dbReference>
<dbReference type="Pfam" id="PF02880">
    <property type="entry name" value="PGM_PMM_III"/>
    <property type="match status" value="1"/>
</dbReference>
<dbReference type="Pfam" id="PF00408">
    <property type="entry name" value="PGM_PMM_IV"/>
    <property type="match status" value="1"/>
</dbReference>
<dbReference type="PRINTS" id="PR00509">
    <property type="entry name" value="PGMPMM"/>
</dbReference>
<dbReference type="SUPFAM" id="SSF55957">
    <property type="entry name" value="Phosphoglucomutase, C-terminal domain"/>
    <property type="match status" value="1"/>
</dbReference>
<dbReference type="SUPFAM" id="SSF53738">
    <property type="entry name" value="Phosphoglucomutase, first 3 domains"/>
    <property type="match status" value="3"/>
</dbReference>
<dbReference type="PROSITE" id="PS00710">
    <property type="entry name" value="PGM_PMM"/>
    <property type="match status" value="1"/>
</dbReference>